<accession>A5WBT1</accession>
<name>RS15_PSYWF</name>
<proteinExistence type="inferred from homology"/>
<evidence type="ECO:0000255" key="1">
    <source>
        <dbReference type="HAMAP-Rule" id="MF_01343"/>
    </source>
</evidence>
<evidence type="ECO:0000256" key="2">
    <source>
        <dbReference type="SAM" id="MobiDB-lite"/>
    </source>
</evidence>
<evidence type="ECO:0000305" key="3"/>
<protein>
    <recommendedName>
        <fullName evidence="1">Small ribosomal subunit protein uS15</fullName>
    </recommendedName>
    <alternativeName>
        <fullName evidence="3">30S ribosomal protein S15</fullName>
    </alternativeName>
</protein>
<comment type="function">
    <text evidence="1">One of the primary rRNA binding proteins, it binds directly to 16S rRNA where it helps nucleate assembly of the platform of the 30S subunit by binding and bridging several RNA helices of the 16S rRNA.</text>
</comment>
<comment type="function">
    <text evidence="1">Forms an intersubunit bridge (bridge B4) with the 23S rRNA of the 50S subunit in the ribosome.</text>
</comment>
<comment type="subunit">
    <text evidence="1">Part of the 30S ribosomal subunit. Forms a bridge to the 50S subunit in the 70S ribosome, contacting the 23S rRNA.</text>
</comment>
<comment type="similarity">
    <text evidence="1">Belongs to the universal ribosomal protein uS15 family.</text>
</comment>
<gene>
    <name evidence="1" type="primary">rpsO</name>
    <name type="ordered locus">PsycPRwf_0163</name>
</gene>
<keyword id="KW-0687">Ribonucleoprotein</keyword>
<keyword id="KW-0689">Ribosomal protein</keyword>
<keyword id="KW-0694">RNA-binding</keyword>
<keyword id="KW-0699">rRNA-binding</keyword>
<organism>
    <name type="scientific">Psychrobacter sp. (strain PRwf-1)</name>
    <dbReference type="NCBI Taxonomy" id="349106"/>
    <lineage>
        <taxon>Bacteria</taxon>
        <taxon>Pseudomonadati</taxon>
        <taxon>Pseudomonadota</taxon>
        <taxon>Gammaproteobacteria</taxon>
        <taxon>Moraxellales</taxon>
        <taxon>Moraxellaceae</taxon>
        <taxon>Psychrobacter</taxon>
    </lineage>
</organism>
<reference key="1">
    <citation type="submission" date="2007-05" db="EMBL/GenBank/DDBJ databases">
        <title>Complete sequence of chromosome of Psychrobacter sp. PRwf-1.</title>
        <authorList>
            <consortium name="US DOE Joint Genome Institute"/>
            <person name="Copeland A."/>
            <person name="Lucas S."/>
            <person name="Lapidus A."/>
            <person name="Barry K."/>
            <person name="Detter J.C."/>
            <person name="Glavina del Rio T."/>
            <person name="Hammon N."/>
            <person name="Israni S."/>
            <person name="Dalin E."/>
            <person name="Tice H."/>
            <person name="Pitluck S."/>
            <person name="Chain P."/>
            <person name="Malfatti S."/>
            <person name="Shin M."/>
            <person name="Vergez L."/>
            <person name="Schmutz J."/>
            <person name="Larimer F."/>
            <person name="Land M."/>
            <person name="Hauser L."/>
            <person name="Kyrpides N."/>
            <person name="Kim E."/>
            <person name="Tiedje J."/>
            <person name="Richardson P."/>
        </authorList>
    </citation>
    <scope>NUCLEOTIDE SEQUENCE [LARGE SCALE GENOMIC DNA]</scope>
    <source>
        <strain>PRwf-1</strain>
    </source>
</reference>
<feature type="chain" id="PRO_1000073337" description="Small ribosomal subunit protein uS15">
    <location>
        <begin position="1"/>
        <end position="88"/>
    </location>
</feature>
<feature type="region of interest" description="Disordered" evidence="2">
    <location>
        <begin position="1"/>
        <end position="23"/>
    </location>
</feature>
<feature type="compositionally biased region" description="Polar residues" evidence="2">
    <location>
        <begin position="1"/>
        <end position="12"/>
    </location>
</feature>
<dbReference type="EMBL" id="CP000713">
    <property type="protein sequence ID" value="ABQ93122.1"/>
    <property type="molecule type" value="Genomic_DNA"/>
</dbReference>
<dbReference type="SMR" id="A5WBT1"/>
<dbReference type="STRING" id="349106.PsycPRwf_0163"/>
<dbReference type="KEGG" id="prw:PsycPRwf_0163"/>
<dbReference type="eggNOG" id="COG0184">
    <property type="taxonomic scope" value="Bacteria"/>
</dbReference>
<dbReference type="HOGENOM" id="CLU_148518_0_0_6"/>
<dbReference type="GO" id="GO:0022627">
    <property type="term" value="C:cytosolic small ribosomal subunit"/>
    <property type="evidence" value="ECO:0007669"/>
    <property type="project" value="TreeGrafter"/>
</dbReference>
<dbReference type="GO" id="GO:0019843">
    <property type="term" value="F:rRNA binding"/>
    <property type="evidence" value="ECO:0007669"/>
    <property type="project" value="UniProtKB-UniRule"/>
</dbReference>
<dbReference type="GO" id="GO:0003735">
    <property type="term" value="F:structural constituent of ribosome"/>
    <property type="evidence" value="ECO:0007669"/>
    <property type="project" value="InterPro"/>
</dbReference>
<dbReference type="GO" id="GO:0006412">
    <property type="term" value="P:translation"/>
    <property type="evidence" value="ECO:0007669"/>
    <property type="project" value="UniProtKB-UniRule"/>
</dbReference>
<dbReference type="CDD" id="cd00353">
    <property type="entry name" value="Ribosomal_S15p_S13e"/>
    <property type="match status" value="1"/>
</dbReference>
<dbReference type="FunFam" id="1.10.287.10:FF:000002">
    <property type="entry name" value="30S ribosomal protein S15"/>
    <property type="match status" value="1"/>
</dbReference>
<dbReference type="Gene3D" id="6.10.250.3130">
    <property type="match status" value="1"/>
</dbReference>
<dbReference type="Gene3D" id="1.10.287.10">
    <property type="entry name" value="S15/NS1, RNA-binding"/>
    <property type="match status" value="1"/>
</dbReference>
<dbReference type="HAMAP" id="MF_01343_B">
    <property type="entry name" value="Ribosomal_uS15_B"/>
    <property type="match status" value="1"/>
</dbReference>
<dbReference type="InterPro" id="IPR000589">
    <property type="entry name" value="Ribosomal_uS15"/>
</dbReference>
<dbReference type="InterPro" id="IPR005290">
    <property type="entry name" value="Ribosomal_uS15_bac-type"/>
</dbReference>
<dbReference type="InterPro" id="IPR009068">
    <property type="entry name" value="uS15_NS1_RNA-bd_sf"/>
</dbReference>
<dbReference type="NCBIfam" id="TIGR00952">
    <property type="entry name" value="S15_bact"/>
    <property type="match status" value="1"/>
</dbReference>
<dbReference type="PANTHER" id="PTHR23321">
    <property type="entry name" value="RIBOSOMAL PROTEIN S15, BACTERIAL AND ORGANELLAR"/>
    <property type="match status" value="1"/>
</dbReference>
<dbReference type="PANTHER" id="PTHR23321:SF26">
    <property type="entry name" value="SMALL RIBOSOMAL SUBUNIT PROTEIN US15M"/>
    <property type="match status" value="1"/>
</dbReference>
<dbReference type="Pfam" id="PF00312">
    <property type="entry name" value="Ribosomal_S15"/>
    <property type="match status" value="1"/>
</dbReference>
<dbReference type="SMART" id="SM01387">
    <property type="entry name" value="Ribosomal_S15"/>
    <property type="match status" value="1"/>
</dbReference>
<dbReference type="SUPFAM" id="SSF47060">
    <property type="entry name" value="S15/NS1 RNA-binding domain"/>
    <property type="match status" value="1"/>
</dbReference>
<dbReference type="PROSITE" id="PS00362">
    <property type="entry name" value="RIBOSOMAL_S15"/>
    <property type="match status" value="1"/>
</dbReference>
<sequence length="88" mass="10265">MLTNTDRQQVIAQYQRAPGDTGSPEVQIALLSARINDLQAHFKEHKGDHHSRRGLIRMVNQRRKLLDYLKRKDLTRYASLISELGLRR</sequence>